<name>NUR1_YEAST</name>
<organism>
    <name type="scientific">Saccharomyces cerevisiae (strain ATCC 204508 / S288c)</name>
    <name type="common">Baker's yeast</name>
    <dbReference type="NCBI Taxonomy" id="559292"/>
    <lineage>
        <taxon>Eukaryota</taxon>
        <taxon>Fungi</taxon>
        <taxon>Dikarya</taxon>
        <taxon>Ascomycota</taxon>
        <taxon>Saccharomycotina</taxon>
        <taxon>Saccharomycetes</taxon>
        <taxon>Saccharomycetales</taxon>
        <taxon>Saccharomycetaceae</taxon>
        <taxon>Saccharomyces</taxon>
    </lineage>
</organism>
<keyword id="KW-0472">Membrane</keyword>
<keyword id="KW-0539">Nucleus</keyword>
<keyword id="KW-0597">Phosphoprotein</keyword>
<keyword id="KW-1185">Reference proteome</keyword>
<keyword id="KW-0812">Transmembrane</keyword>
<keyword id="KW-1133">Transmembrane helix</keyword>
<sequence>MGSNDLINEAYDDSEVVGEERESKSAWMKRWYQLLTSPLDLQLVINEKLEMINWDAYAKSLAKPLGNFLTILFFIIRLLQDNLIKPNYYKLNVKSGAFDLSKSNKLKEFDYLWEISSSFQNNNQFYAFQSWYFVTLRFLNNLFRFTIFILLSLNLYVSCKFMFGYFKTYNLFHLKKEFNSPNLTKHNLKDLSKEYYEDIYKQSLWSMLKHFFRGSRDDGPHVNQNEDEIFFQLRKWIPTNFMINLFVSFSPTAIVFLSFSDVSFTSAIAIVFHQYILDYIITKRFQRSVDDDLILSSAALQEYEDKHIMARINQCSNIDTLSSAMGTRSKTPRIFTTHSLCGEEIREVYNYEKREFEALPKMTESVPGSRETRIKDYGGISQVSDHQSHPIGFHYSPRMSPYYRDKVLDNNLAQSSSNENLEKGGAYLPNQDQNRPSKSLSPLRKTPLSARQKRFEGSEFNVLNKNDINSILRSPKKKKNYHKR</sequence>
<comment type="function">
    <text evidence="6">Member of a perinuclear network that controls recombination at multiple loci to maintain genome stability. Required for rDNA repeat stability.</text>
</comment>
<comment type="subunit">
    <text evidence="5 6">Interacts with CSM1.</text>
</comment>
<comment type="interaction">
    <interactant intactId="EBI-35877">
        <id>Q12066</id>
    </interactant>
    <interactant intactId="EBI-18064">
        <id>Q03707</id>
        <label>SRC1</label>
    </interactant>
    <organismsDiffer>false</organismsDiffer>
    <experiments>2</experiments>
</comment>
<comment type="subcellular location">
    <subcellularLocation>
        <location evidence="3">Nucleus membrane</location>
        <topology evidence="3">Multi-pass membrane protein</topology>
    </subcellularLocation>
</comment>
<comment type="miscellaneous">
    <text evidence="4">Present with 606 molecules/cell in log phase SD medium.</text>
</comment>
<comment type="similarity">
    <text evidence="7">Belongs to the NUR1 family.</text>
</comment>
<protein>
    <recommendedName>
        <fullName>Nuclear rim protein 1</fullName>
    </recommendedName>
</protein>
<gene>
    <name type="primary">NUR1</name>
    <name type="ordered locus">YDL089W</name>
    <name type="ORF">D2416</name>
</gene>
<proteinExistence type="evidence at protein level"/>
<dbReference type="EMBL" id="X95644">
    <property type="protein sequence ID" value="CAA64922.1"/>
    <property type="molecule type" value="Genomic_DNA"/>
</dbReference>
<dbReference type="EMBL" id="Z74137">
    <property type="protein sequence ID" value="CAA98655.1"/>
    <property type="molecule type" value="Genomic_DNA"/>
</dbReference>
<dbReference type="EMBL" id="BK006938">
    <property type="protein sequence ID" value="DAA11769.1"/>
    <property type="molecule type" value="Genomic_DNA"/>
</dbReference>
<dbReference type="PIR" id="S67625">
    <property type="entry name" value="S67625"/>
</dbReference>
<dbReference type="RefSeq" id="NP_010194.1">
    <property type="nucleotide sequence ID" value="NM_001180148.1"/>
</dbReference>
<dbReference type="BioGRID" id="31971">
    <property type="interactions" value="69"/>
</dbReference>
<dbReference type="DIP" id="DIP-1799N"/>
<dbReference type="FunCoup" id="Q12066">
    <property type="interactions" value="51"/>
</dbReference>
<dbReference type="IntAct" id="Q12066">
    <property type="interactions" value="10"/>
</dbReference>
<dbReference type="MINT" id="Q12066"/>
<dbReference type="STRING" id="4932.YDL089W"/>
<dbReference type="iPTMnet" id="Q12066"/>
<dbReference type="PaxDb" id="4932-YDL089W"/>
<dbReference type="PeptideAtlas" id="Q12066"/>
<dbReference type="EnsemblFungi" id="YDL089W_mRNA">
    <property type="protein sequence ID" value="YDL089W"/>
    <property type="gene ID" value="YDL089W"/>
</dbReference>
<dbReference type="GeneID" id="851469"/>
<dbReference type="KEGG" id="sce:YDL089W"/>
<dbReference type="AGR" id="SGD:S000002247"/>
<dbReference type="SGD" id="S000002247">
    <property type="gene designation" value="NUR1"/>
</dbReference>
<dbReference type="VEuPathDB" id="FungiDB:YDL089W"/>
<dbReference type="eggNOG" id="ENOG502S7S0">
    <property type="taxonomic scope" value="Eukaryota"/>
</dbReference>
<dbReference type="HOGENOM" id="CLU_033252_1_0_1"/>
<dbReference type="InParanoid" id="Q12066"/>
<dbReference type="OMA" id="TRSHIFQ"/>
<dbReference type="OrthoDB" id="3363151at2759"/>
<dbReference type="BioCyc" id="YEAST:G3O-29497-MONOMER"/>
<dbReference type="BioGRID-ORCS" id="851469">
    <property type="hits" value="0 hits in 10 CRISPR screens"/>
</dbReference>
<dbReference type="PRO" id="PR:Q12066"/>
<dbReference type="Proteomes" id="UP000002311">
    <property type="component" value="Chromosome IV"/>
</dbReference>
<dbReference type="RNAct" id="Q12066">
    <property type="molecule type" value="protein"/>
</dbReference>
<dbReference type="GO" id="GO:0031965">
    <property type="term" value="C:nuclear membrane"/>
    <property type="evidence" value="ECO:0007669"/>
    <property type="project" value="UniProtKB-SubCell"/>
</dbReference>
<dbReference type="GO" id="GO:0034399">
    <property type="term" value="C:nuclear periphery"/>
    <property type="evidence" value="ECO:0007005"/>
    <property type="project" value="SGD"/>
</dbReference>
<dbReference type="GO" id="GO:0043007">
    <property type="term" value="P:maintenance of rDNA"/>
    <property type="evidence" value="ECO:0000315"/>
    <property type="project" value="SGD"/>
</dbReference>
<dbReference type="GO" id="GO:0007096">
    <property type="term" value="P:regulation of exit from mitosis"/>
    <property type="evidence" value="ECO:0000315"/>
    <property type="project" value="SGD"/>
</dbReference>
<dbReference type="InterPro" id="IPR018819">
    <property type="entry name" value="Nur1/Mug154"/>
</dbReference>
<dbReference type="PANTHER" id="PTHR28293">
    <property type="entry name" value="NUCLEAR RIM PROTEIN 1"/>
    <property type="match status" value="1"/>
</dbReference>
<dbReference type="PANTHER" id="PTHR28293:SF1">
    <property type="entry name" value="NUCLEAR RIM PROTEIN 1"/>
    <property type="match status" value="1"/>
</dbReference>
<dbReference type="Pfam" id="PF10332">
    <property type="entry name" value="DUF2418"/>
    <property type="match status" value="1"/>
</dbReference>
<accession>Q12066</accession>
<accession>D6VRQ9</accession>
<feature type="chain" id="PRO_0000202586" description="Nuclear rim protein 1">
    <location>
        <begin position="1"/>
        <end position="484"/>
    </location>
</feature>
<feature type="transmembrane region" description="Helical" evidence="1">
    <location>
        <begin position="145"/>
        <end position="165"/>
    </location>
</feature>
<feature type="transmembrane region" description="Helical" evidence="1">
    <location>
        <begin position="252"/>
        <end position="272"/>
    </location>
</feature>
<feature type="region of interest" description="Disordered" evidence="2">
    <location>
        <begin position="416"/>
        <end position="457"/>
    </location>
</feature>
<feature type="compositionally biased region" description="Polar residues" evidence="2">
    <location>
        <begin position="430"/>
        <end position="440"/>
    </location>
</feature>
<feature type="modified residue" description="Phosphoserine" evidence="8">
    <location>
        <position position="3"/>
    </location>
</feature>
<feature type="modified residue" description="Phosphoserine" evidence="9">
    <location>
        <position position="417"/>
    </location>
</feature>
<feature type="modified residue" description="Phosphoserine" evidence="9">
    <location>
        <position position="474"/>
    </location>
</feature>
<reference key="1">
    <citation type="journal article" date="1996" name="Yeast">
        <title>The sequence of a 16,691 bp segment of Saccharomyces cerevisiae chromosome IV identifies the DUN1, PMT1, PMT5, SRP14 and DPR1 genes, and five new open reading frames.</title>
        <authorList>
            <person name="Boskovic J."/>
            <person name="Soler-Mira A."/>
            <person name="Garcia-Cantalejo J.M."/>
            <person name="Ballesta J.P.G."/>
            <person name="Jimenez A."/>
            <person name="Remacha M.A."/>
        </authorList>
    </citation>
    <scope>NUCLEOTIDE SEQUENCE [GENOMIC DNA]</scope>
    <source>
        <strain>ATCC 96604 / S288c / FY1679</strain>
    </source>
</reference>
<reference key="2">
    <citation type="journal article" date="1997" name="Nature">
        <title>The nucleotide sequence of Saccharomyces cerevisiae chromosome IV.</title>
        <authorList>
            <person name="Jacq C."/>
            <person name="Alt-Moerbe J."/>
            <person name="Andre B."/>
            <person name="Arnold W."/>
            <person name="Bahr A."/>
            <person name="Ballesta J.P.G."/>
            <person name="Bargues M."/>
            <person name="Baron L."/>
            <person name="Becker A."/>
            <person name="Biteau N."/>
            <person name="Bloecker H."/>
            <person name="Blugeon C."/>
            <person name="Boskovic J."/>
            <person name="Brandt P."/>
            <person name="Brueckner M."/>
            <person name="Buitrago M.J."/>
            <person name="Coster F."/>
            <person name="Delaveau T."/>
            <person name="del Rey F."/>
            <person name="Dujon B."/>
            <person name="Eide L.G."/>
            <person name="Garcia-Cantalejo J.M."/>
            <person name="Goffeau A."/>
            <person name="Gomez-Peris A."/>
            <person name="Granotier C."/>
            <person name="Hanemann V."/>
            <person name="Hankeln T."/>
            <person name="Hoheisel J.D."/>
            <person name="Jaeger W."/>
            <person name="Jimenez A."/>
            <person name="Jonniaux J.-L."/>
            <person name="Kraemer C."/>
            <person name="Kuester H."/>
            <person name="Laamanen P."/>
            <person name="Legros Y."/>
            <person name="Louis E.J."/>
            <person name="Moeller-Rieker S."/>
            <person name="Monnet A."/>
            <person name="Moro M."/>
            <person name="Mueller-Auer S."/>
            <person name="Nussbaumer B."/>
            <person name="Paricio N."/>
            <person name="Paulin L."/>
            <person name="Perea J."/>
            <person name="Perez-Alonso M."/>
            <person name="Perez-Ortin J.E."/>
            <person name="Pohl T.M."/>
            <person name="Prydz H."/>
            <person name="Purnelle B."/>
            <person name="Rasmussen S.W."/>
            <person name="Remacha M.A."/>
            <person name="Revuelta J.L."/>
            <person name="Rieger M."/>
            <person name="Salom D."/>
            <person name="Saluz H.P."/>
            <person name="Saiz J.E."/>
            <person name="Saren A.-M."/>
            <person name="Schaefer M."/>
            <person name="Scharfe M."/>
            <person name="Schmidt E.R."/>
            <person name="Schneider C."/>
            <person name="Scholler P."/>
            <person name="Schwarz S."/>
            <person name="Soler-Mira A."/>
            <person name="Urrestarazu L.A."/>
            <person name="Verhasselt P."/>
            <person name="Vissers S."/>
            <person name="Voet M."/>
            <person name="Volckaert G."/>
            <person name="Wagner G."/>
            <person name="Wambutt R."/>
            <person name="Wedler E."/>
            <person name="Wedler H."/>
            <person name="Woelfl S."/>
            <person name="Harris D.E."/>
            <person name="Bowman S."/>
            <person name="Brown D."/>
            <person name="Churcher C.M."/>
            <person name="Connor R."/>
            <person name="Dedman K."/>
            <person name="Gentles S."/>
            <person name="Hamlin N."/>
            <person name="Hunt S."/>
            <person name="Jones L."/>
            <person name="McDonald S."/>
            <person name="Murphy L.D."/>
            <person name="Niblett D."/>
            <person name="Odell C."/>
            <person name="Oliver K."/>
            <person name="Rajandream M.A."/>
            <person name="Richards C."/>
            <person name="Shore L."/>
            <person name="Walsh S.V."/>
            <person name="Barrell B.G."/>
            <person name="Dietrich F.S."/>
            <person name="Mulligan J.T."/>
            <person name="Allen E."/>
            <person name="Araujo R."/>
            <person name="Aviles E."/>
            <person name="Berno A."/>
            <person name="Carpenter J."/>
            <person name="Chen E."/>
            <person name="Cherry J.M."/>
            <person name="Chung E."/>
            <person name="Duncan M."/>
            <person name="Hunicke-Smith S."/>
            <person name="Hyman R.W."/>
            <person name="Komp C."/>
            <person name="Lashkari D."/>
            <person name="Lew H."/>
            <person name="Lin D."/>
            <person name="Mosedale D."/>
            <person name="Nakahara K."/>
            <person name="Namath A."/>
            <person name="Oefner P."/>
            <person name="Oh C."/>
            <person name="Petel F.X."/>
            <person name="Roberts D."/>
            <person name="Schramm S."/>
            <person name="Schroeder M."/>
            <person name="Shogren T."/>
            <person name="Shroff N."/>
            <person name="Winant A."/>
            <person name="Yelton M.A."/>
            <person name="Botstein D."/>
            <person name="Davis R.W."/>
            <person name="Johnston M."/>
            <person name="Andrews S."/>
            <person name="Brinkman R."/>
            <person name="Cooper J."/>
            <person name="Ding H."/>
            <person name="Du Z."/>
            <person name="Favello A."/>
            <person name="Fulton L."/>
            <person name="Gattung S."/>
            <person name="Greco T."/>
            <person name="Hallsworth K."/>
            <person name="Hawkins J."/>
            <person name="Hillier L.W."/>
            <person name="Jier M."/>
            <person name="Johnson D."/>
            <person name="Johnston L."/>
            <person name="Kirsten J."/>
            <person name="Kucaba T."/>
            <person name="Langston Y."/>
            <person name="Latreille P."/>
            <person name="Le T."/>
            <person name="Mardis E."/>
            <person name="Menezes S."/>
            <person name="Miller N."/>
            <person name="Nhan M."/>
            <person name="Pauley A."/>
            <person name="Peluso D."/>
            <person name="Rifkin L."/>
            <person name="Riles L."/>
            <person name="Taich A."/>
            <person name="Trevaskis E."/>
            <person name="Vignati D."/>
            <person name="Wilcox L."/>
            <person name="Wohldman P."/>
            <person name="Vaudin M."/>
            <person name="Wilson R."/>
            <person name="Waterston R."/>
            <person name="Albermann K."/>
            <person name="Hani J."/>
            <person name="Heumann K."/>
            <person name="Kleine K."/>
            <person name="Mewes H.-W."/>
            <person name="Zollner A."/>
            <person name="Zaccaria P."/>
        </authorList>
    </citation>
    <scope>NUCLEOTIDE SEQUENCE [LARGE SCALE GENOMIC DNA]</scope>
    <source>
        <strain>ATCC 204508 / S288c</strain>
    </source>
</reference>
<reference key="3">
    <citation type="journal article" date="2014" name="G3 (Bethesda)">
        <title>The reference genome sequence of Saccharomyces cerevisiae: Then and now.</title>
        <authorList>
            <person name="Engel S.R."/>
            <person name="Dietrich F.S."/>
            <person name="Fisk D.G."/>
            <person name="Binkley G."/>
            <person name="Balakrishnan R."/>
            <person name="Costanzo M.C."/>
            <person name="Dwight S.S."/>
            <person name="Hitz B.C."/>
            <person name="Karra K."/>
            <person name="Nash R.S."/>
            <person name="Weng S."/>
            <person name="Wong E.D."/>
            <person name="Lloyd P."/>
            <person name="Skrzypek M.S."/>
            <person name="Miyasato S.R."/>
            <person name="Simison M."/>
            <person name="Cherry J.M."/>
        </authorList>
    </citation>
    <scope>GENOME REANNOTATION</scope>
    <source>
        <strain>ATCC 204508 / S288c</strain>
    </source>
</reference>
<reference key="4">
    <citation type="journal article" date="2003" name="Nature">
        <title>Global analysis of protein localization in budding yeast.</title>
        <authorList>
            <person name="Huh W.-K."/>
            <person name="Falvo J.V."/>
            <person name="Gerke L.C."/>
            <person name="Carroll A.S."/>
            <person name="Howson R.W."/>
            <person name="Weissman J.S."/>
            <person name="O'Shea E.K."/>
        </authorList>
    </citation>
    <scope>SUBCELLULAR LOCATION [LARGE SCALE ANALYSIS]</scope>
</reference>
<reference key="5">
    <citation type="journal article" date="2003" name="Nature">
        <title>Global analysis of protein expression in yeast.</title>
        <authorList>
            <person name="Ghaemmaghami S."/>
            <person name="Huh W.-K."/>
            <person name="Bower K."/>
            <person name="Howson R.W."/>
            <person name="Belle A."/>
            <person name="Dephoure N."/>
            <person name="O'Shea E.K."/>
            <person name="Weissman J.S."/>
        </authorList>
    </citation>
    <scope>LEVEL OF PROTEIN EXPRESSION [LARGE SCALE ANALYSIS]</scope>
</reference>
<reference key="6">
    <citation type="journal article" date="2004" name="Exp. Cell Res.">
        <title>Saccharomyces cerevisiae CSM1 gene encoding a protein influencing chromosome segregation in meiosis I interacts with elements of the DNA replication complex.</title>
        <authorList>
            <person name="Wysocka M."/>
            <person name="Rytka J."/>
            <person name="Kurlandzka A."/>
        </authorList>
    </citation>
    <scope>INTERACTION WITH CSM1</scope>
</reference>
<reference key="7">
    <citation type="journal article" date="2007" name="J. Proteome Res.">
        <title>Large-scale phosphorylation analysis of alpha-factor-arrested Saccharomyces cerevisiae.</title>
        <authorList>
            <person name="Li X."/>
            <person name="Gerber S.A."/>
            <person name="Rudner A.D."/>
            <person name="Beausoleil S.A."/>
            <person name="Haas W."/>
            <person name="Villen J."/>
            <person name="Elias J.E."/>
            <person name="Gygi S.P."/>
        </authorList>
    </citation>
    <scope>IDENTIFICATION BY MASS SPECTROMETRY [LARGE SCALE ANALYSIS]</scope>
    <source>
        <strain>ADR376</strain>
    </source>
</reference>
<reference key="8">
    <citation type="journal article" date="2008" name="Mol. Cell. Proteomics">
        <title>A multidimensional chromatography technology for in-depth phosphoproteome analysis.</title>
        <authorList>
            <person name="Albuquerque C.P."/>
            <person name="Smolka M.B."/>
            <person name="Payne S.H."/>
            <person name="Bafna V."/>
            <person name="Eng J."/>
            <person name="Zhou H."/>
        </authorList>
    </citation>
    <scope>PHOSPHORYLATION [LARGE SCALE ANALYSIS] AT SER-3</scope>
    <scope>IDENTIFICATION BY MASS SPECTROMETRY [LARGE SCALE ANALYSIS]</scope>
</reference>
<reference key="9">
    <citation type="journal article" date="2008" name="Nature">
        <title>Role for perinuclear chromosome tethering in maintenance of genome stability.</title>
        <authorList>
            <person name="Mekhail K."/>
            <person name="Seebacher J."/>
            <person name="Gygi S.P."/>
            <person name="Moazed D."/>
        </authorList>
    </citation>
    <scope>FUNCTION</scope>
    <scope>INTERACTION WITH CSM1</scope>
</reference>
<reference key="10">
    <citation type="journal article" date="2009" name="Science">
        <title>Global analysis of Cdk1 substrate phosphorylation sites provides insights into evolution.</title>
        <authorList>
            <person name="Holt L.J."/>
            <person name="Tuch B.B."/>
            <person name="Villen J."/>
            <person name="Johnson A.D."/>
            <person name="Gygi S.P."/>
            <person name="Morgan D.O."/>
        </authorList>
    </citation>
    <scope>PHOSPHORYLATION [LARGE SCALE ANALYSIS] AT SER-417 AND SER-474</scope>
    <scope>IDENTIFICATION BY MASS SPECTROMETRY [LARGE SCALE ANALYSIS]</scope>
</reference>
<evidence type="ECO:0000255" key="1"/>
<evidence type="ECO:0000256" key="2">
    <source>
        <dbReference type="SAM" id="MobiDB-lite"/>
    </source>
</evidence>
<evidence type="ECO:0000269" key="3">
    <source>
    </source>
</evidence>
<evidence type="ECO:0000269" key="4">
    <source>
    </source>
</evidence>
<evidence type="ECO:0000269" key="5">
    <source>
    </source>
</evidence>
<evidence type="ECO:0000269" key="6">
    <source>
    </source>
</evidence>
<evidence type="ECO:0000305" key="7"/>
<evidence type="ECO:0007744" key="8">
    <source>
    </source>
</evidence>
<evidence type="ECO:0007744" key="9">
    <source>
    </source>
</evidence>